<dbReference type="EC" id="3.4.11.7" evidence="9"/>
<dbReference type="EMBL" id="FN666431">
    <property type="protein sequence ID" value="CBJ34330.1"/>
    <property type="molecule type" value="mRNA"/>
</dbReference>
<dbReference type="MEROPS" id="M01.003"/>
<dbReference type="SABIO-RK" id="D3UW23"/>
<dbReference type="GO" id="GO:0005737">
    <property type="term" value="C:cytoplasm"/>
    <property type="evidence" value="ECO:0007669"/>
    <property type="project" value="TreeGrafter"/>
</dbReference>
<dbReference type="GO" id="GO:0005615">
    <property type="term" value="C:extracellular space"/>
    <property type="evidence" value="ECO:0007669"/>
    <property type="project" value="TreeGrafter"/>
</dbReference>
<dbReference type="GO" id="GO:0005886">
    <property type="term" value="C:plasma membrane"/>
    <property type="evidence" value="ECO:0007669"/>
    <property type="project" value="UniProtKB-SubCell"/>
</dbReference>
<dbReference type="GO" id="GO:0004230">
    <property type="term" value="F:glutamyl aminopeptidase activity"/>
    <property type="evidence" value="ECO:0007669"/>
    <property type="project" value="UniProtKB-EC"/>
</dbReference>
<dbReference type="GO" id="GO:0070006">
    <property type="term" value="F:metalloaminopeptidase activity"/>
    <property type="evidence" value="ECO:0007669"/>
    <property type="project" value="TreeGrafter"/>
</dbReference>
<dbReference type="GO" id="GO:0042277">
    <property type="term" value="F:peptide binding"/>
    <property type="evidence" value="ECO:0007669"/>
    <property type="project" value="TreeGrafter"/>
</dbReference>
<dbReference type="GO" id="GO:0008270">
    <property type="term" value="F:zinc ion binding"/>
    <property type="evidence" value="ECO:0007669"/>
    <property type="project" value="InterPro"/>
</dbReference>
<dbReference type="GO" id="GO:0043171">
    <property type="term" value="P:peptide catabolic process"/>
    <property type="evidence" value="ECO:0007669"/>
    <property type="project" value="TreeGrafter"/>
</dbReference>
<dbReference type="GO" id="GO:0006508">
    <property type="term" value="P:proteolysis"/>
    <property type="evidence" value="ECO:0007669"/>
    <property type="project" value="UniProtKB-KW"/>
</dbReference>
<dbReference type="GO" id="GO:0008217">
    <property type="term" value="P:regulation of blood pressure"/>
    <property type="evidence" value="ECO:0007669"/>
    <property type="project" value="TreeGrafter"/>
</dbReference>
<dbReference type="CDD" id="cd09601">
    <property type="entry name" value="M1_APN-Q_like"/>
    <property type="match status" value="1"/>
</dbReference>
<dbReference type="FunFam" id="1.25.50.20:FF:000001">
    <property type="entry name" value="Aminopeptidase"/>
    <property type="match status" value="1"/>
</dbReference>
<dbReference type="FunFam" id="2.60.40.1730:FF:000006">
    <property type="entry name" value="Aminopeptidase"/>
    <property type="match status" value="1"/>
</dbReference>
<dbReference type="FunFam" id="2.60.40.1910:FF:000003">
    <property type="entry name" value="Aminopeptidase"/>
    <property type="match status" value="1"/>
</dbReference>
<dbReference type="FunFam" id="1.10.390.10:FF:000016">
    <property type="entry name" value="Glutamyl aminopeptidase"/>
    <property type="match status" value="1"/>
</dbReference>
<dbReference type="Gene3D" id="1.25.50.20">
    <property type="match status" value="1"/>
</dbReference>
<dbReference type="Gene3D" id="2.60.40.1910">
    <property type="match status" value="1"/>
</dbReference>
<dbReference type="Gene3D" id="1.10.390.10">
    <property type="entry name" value="Neutral Protease Domain 2"/>
    <property type="match status" value="1"/>
</dbReference>
<dbReference type="Gene3D" id="2.60.40.1730">
    <property type="entry name" value="tricorn interacting facor f3 domain"/>
    <property type="match status" value="1"/>
</dbReference>
<dbReference type="InterPro" id="IPR045357">
    <property type="entry name" value="Aminopeptidase_N-like_N"/>
</dbReference>
<dbReference type="InterPro" id="IPR042097">
    <property type="entry name" value="Aminopeptidase_N-like_N_sf"/>
</dbReference>
<dbReference type="InterPro" id="IPR024571">
    <property type="entry name" value="ERAP1-like_C_dom"/>
</dbReference>
<dbReference type="InterPro" id="IPR034016">
    <property type="entry name" value="M1_APN-typ"/>
</dbReference>
<dbReference type="InterPro" id="IPR001930">
    <property type="entry name" value="Peptidase_M1"/>
</dbReference>
<dbReference type="InterPro" id="IPR050344">
    <property type="entry name" value="Peptidase_M1_aminopeptidases"/>
</dbReference>
<dbReference type="InterPro" id="IPR014782">
    <property type="entry name" value="Peptidase_M1_dom"/>
</dbReference>
<dbReference type="InterPro" id="IPR027268">
    <property type="entry name" value="Peptidase_M4/M1_CTD_sf"/>
</dbReference>
<dbReference type="PANTHER" id="PTHR11533:SF276">
    <property type="entry name" value="GLUTAMYL AMINOPEPTIDASE"/>
    <property type="match status" value="1"/>
</dbReference>
<dbReference type="PANTHER" id="PTHR11533">
    <property type="entry name" value="PROTEASE M1 ZINC METALLOPROTEASE"/>
    <property type="match status" value="1"/>
</dbReference>
<dbReference type="Pfam" id="PF11838">
    <property type="entry name" value="ERAP1_C"/>
    <property type="match status" value="1"/>
</dbReference>
<dbReference type="Pfam" id="PF01433">
    <property type="entry name" value="Peptidase_M1"/>
    <property type="match status" value="1"/>
</dbReference>
<dbReference type="Pfam" id="PF17900">
    <property type="entry name" value="Peptidase_M1_N"/>
    <property type="match status" value="1"/>
</dbReference>
<dbReference type="PRINTS" id="PR00756">
    <property type="entry name" value="ALADIPTASE"/>
</dbReference>
<dbReference type="SUPFAM" id="SSF63737">
    <property type="entry name" value="Leukotriene A4 hydrolase N-terminal domain"/>
    <property type="match status" value="1"/>
</dbReference>
<dbReference type="SUPFAM" id="SSF55486">
    <property type="entry name" value="Metalloproteases ('zincins'), catalytic domain"/>
    <property type="match status" value="1"/>
</dbReference>
<dbReference type="PROSITE" id="PS00142">
    <property type="entry name" value="ZINC_PROTEASE"/>
    <property type="match status" value="1"/>
</dbReference>
<protein>
    <recommendedName>
        <fullName evidence="10">Glutamyl aminopeptidase</fullName>
        <shortName evidence="11">EAP</shortName>
        <ecNumber evidence="9">3.4.11.7</ecNumber>
    </recommendedName>
    <alternativeName>
        <fullName evidence="10">Aminopeptidase A</fullName>
        <shortName evidence="10">AP-A</shortName>
    </alternativeName>
    <alternativeName>
        <fullName evidence="10">Rhiminopeptidase A</fullName>
    </alternativeName>
</protein>
<accession>D3UW23</accession>
<comment type="function">
    <text evidence="1 9">Venom protein that cleaves N-terminal acidic residues from peptides with high potency in presence of calcium (PubMed:20706583). It may have several roles in venom including alteration of blood pressure by cleaving circulating angiotensin-2, general degradation of host tissue, increase of permeability to other venom components, and/or processing of other toxins in the venom (By similarity).</text>
</comment>
<comment type="catalytic activity">
    <reaction evidence="9">
        <text>Release of N-terminal glutamate (and to a lesser extent aspartate) from a peptide.</text>
        <dbReference type="EC" id="3.4.11.7"/>
    </reaction>
</comment>
<comment type="cofactor">
    <cofactor evidence="2">
        <name>Zn(2+)</name>
        <dbReference type="ChEBI" id="CHEBI:29105"/>
    </cofactor>
    <text evidence="2">Binds 1 zinc ion per subunit.</text>
</comment>
<comment type="activity regulation">
    <text evidence="9">Substrate specificity is modulated by calcium which enhances the enzymatic activity for cleavage of acidic residues while reducing its activity with neutral and basic residues (PubMed:20706583). Hydrolytic activity is inhibited by the aminopeptidase inhibitor (Leu and acidic inhibitor) amastatin, but not by bestatin (aminopeptidase inhibitor Leu inhibitor), leupeptin, pepstatin A and PMSF (PubMed:20706583). Its hydrolytic activity is also strongly reduced by zinc ions, with a complete inhibition at 0.5 mM, and moderately inhibited by cobalt and copper ions (PubMed:20706583).</text>
</comment>
<comment type="biophysicochemical properties">
    <kinetics>
        <KM evidence="9">703 uM for Glu-AMC (in presence of 1.2 mM Ca(2+))</KM>
        <KM evidence="9">2478 uM for Asp-AMC (in presence of 1.2 mM Ca(2+))</KM>
        <KM evidence="9">2235 uM for Glu-AMC (in absence of Ca(2+))</KM>
        <KM evidence="9">4119 uM for Asp-AMC (in absence Ca(2+))</KM>
    </kinetics>
</comment>
<comment type="subunit">
    <text evidence="2">Homodimer; disulfide-linked.</text>
</comment>
<comment type="subcellular location">
    <subcellularLocation>
        <location evidence="2">Cell membrane</location>
        <topology evidence="3">Single-pass type II membrane protein</topology>
    </subcellularLocation>
    <text evidence="1">Found in the venom as transmembrane proteins in exosome-like vesicles.</text>
</comment>
<comment type="PTM">
    <text evidence="9">N-glycosylated. Glycosylation counts for an increased mass of about 32% of the protein mass (about 48 kDa).</text>
</comment>
<comment type="similarity">
    <text evidence="11">Belongs to the peptidase M1 family.</text>
</comment>
<reference evidence="13" key="1">
    <citation type="journal article" date="2010" name="PLoS Negl. Trop. Dis.">
        <title>Purification and functional characterisation of rhiminopeptidase A, a novel aminopeptidase from the venom of Bitis gabonica rhinoceros.</title>
        <authorList>
            <person name="Vaiyapuri S."/>
            <person name="Wagstaff S.C."/>
            <person name="Watson K.A."/>
            <person name="Harrison R.A."/>
            <person name="Gibbins J.M."/>
            <person name="Hutchinson E.G."/>
        </authorList>
    </citation>
    <scope>NUCLEOTIDE SEQUENCE [MRNA]</scope>
    <scope>PROTEIN SEQUENCE OF 653-663</scope>
    <scope>IDENTIFICATION BY MASS SPECTROMETRY</scope>
    <scope>ACTIVITY REGULATION</scope>
    <scope>BIOPHYSICOCHEMICAL PROPERTIES</scope>
    <scope>GLYCOSYLATION</scope>
    <scope>X-RAY CRYSTALLOGRAPHY (7.5 ANGSTROMS)</scope>
    <scope>3D-STRUCTURE MODELING</scope>
    <source>
        <tissue>Venom</tissue>
        <tissue>Venom gland</tissue>
    </source>
</reference>
<organism>
    <name type="scientific">Bitis rhinoceros</name>
    <name type="common">West African gaboon viper</name>
    <name type="synonym">Vipera rhinoceros</name>
    <dbReference type="NCBI Taxonomy" id="715877"/>
    <lineage>
        <taxon>Eukaryota</taxon>
        <taxon>Metazoa</taxon>
        <taxon>Chordata</taxon>
        <taxon>Craniata</taxon>
        <taxon>Vertebrata</taxon>
        <taxon>Euteleostomi</taxon>
        <taxon>Lepidosauria</taxon>
        <taxon>Squamata</taxon>
        <taxon>Bifurcata</taxon>
        <taxon>Unidentata</taxon>
        <taxon>Episquamata</taxon>
        <taxon>Toxicofera</taxon>
        <taxon>Serpentes</taxon>
        <taxon>Colubroidea</taxon>
        <taxon>Viperidae</taxon>
        <taxon>Viperinae</taxon>
        <taxon>Bitis</taxon>
    </lineage>
</organism>
<feature type="chain" id="PRO_0000455654" description="Glutamyl aminopeptidase" evidence="12">
    <location>
        <begin position="1"/>
        <end position="955"/>
    </location>
</feature>
<feature type="topological domain" description="Cytoplasmic" evidence="11">
    <location>
        <begin position="1"/>
        <end position="17"/>
    </location>
</feature>
<feature type="transmembrane region" description="Helical; Signal-anchor for type II membrane protein" evidence="11">
    <location>
        <begin position="18"/>
        <end position="38"/>
    </location>
</feature>
<feature type="topological domain" description="Extracellular" evidence="11">
    <location>
        <begin position="39"/>
        <end position="955"/>
    </location>
</feature>
<feature type="active site" description="Proton acceptor" evidence="2 4">
    <location>
        <position position="389"/>
    </location>
</feature>
<feature type="binding site" evidence="2 5">
    <location>
        <position position="218"/>
    </location>
    <ligand>
        <name>substrate</name>
    </ligand>
</feature>
<feature type="binding site" evidence="2 5">
    <location>
        <begin position="352"/>
        <end position="356"/>
    </location>
    <ligand>
        <name>substrate</name>
    </ligand>
</feature>
<feature type="binding site" evidence="2 7">
    <location>
        <position position="388"/>
    </location>
    <ligand>
        <name>Zn(2+)</name>
        <dbReference type="ChEBI" id="CHEBI:29105"/>
        <note>catalytic</note>
    </ligand>
</feature>
<feature type="binding site" evidence="2 7">
    <location>
        <position position="392"/>
    </location>
    <ligand>
        <name>Zn(2+)</name>
        <dbReference type="ChEBI" id="CHEBI:29105"/>
        <note>catalytic</note>
    </ligand>
</feature>
<feature type="binding site" evidence="2 7">
    <location>
        <position position="411"/>
    </location>
    <ligand>
        <name>Zn(2+)</name>
        <dbReference type="ChEBI" id="CHEBI:29105"/>
        <note>catalytic</note>
    </ligand>
</feature>
<feature type="binding site" evidence="2 5">
    <location>
        <position position="882"/>
    </location>
    <ligand>
        <name>substrate</name>
    </ligand>
</feature>
<feature type="site" description="Binds calcium which modulates its enzyme activity" evidence="2 6">
    <location>
        <position position="216"/>
    </location>
</feature>
<feature type="site" description="Transition state stabilizer" evidence="2 6">
    <location>
        <position position="474"/>
    </location>
</feature>
<feature type="glycosylation site" description="N-linked (GlcNAc...) asparagine" evidence="8">
    <location>
        <position position="118"/>
    </location>
</feature>
<feature type="glycosylation site" description="N-linked (GlcNAc...) asparagine" evidence="8">
    <location>
        <position position="192"/>
    </location>
</feature>
<feature type="glycosylation site" description="N-linked (GlcNAc...) asparagine" evidence="8">
    <location>
        <position position="319"/>
    </location>
</feature>
<feature type="glycosylation site" description="N-linked (GlcNAc...) asparagine" evidence="8">
    <location>
        <position position="335"/>
    </location>
</feature>
<feature type="glycosylation site" description="N-linked (GlcNAc...) asparagine" evidence="8">
    <location>
        <position position="458"/>
    </location>
</feature>
<feature type="glycosylation site" description="N-linked (GlcNAc...) asparagine" evidence="8">
    <location>
        <position position="547"/>
    </location>
</feature>
<feature type="glycosylation site" description="N-linked (GlcNAc...) asparagine" evidence="8">
    <location>
        <position position="584"/>
    </location>
</feature>
<feature type="glycosylation site" description="N-linked (GlcNAc...) asparagine" evidence="8">
    <location>
        <position position="592"/>
    </location>
</feature>
<feature type="glycosylation site" description="N-linked (GlcNAc...) asparagine" evidence="8">
    <location>
        <position position="674"/>
    </location>
</feature>
<feature type="glycosylation site" description="N-linked (GlcNAc...) asparagine" evidence="8">
    <location>
        <position position="759"/>
    </location>
</feature>
<feature type="glycosylation site" description="N-linked (GlcNAc...) asparagine" evidence="8">
    <location>
        <position position="823"/>
    </location>
</feature>
<feature type="glycosylation site" description="N-linked (GlcNAc...) asparagine" evidence="8">
    <location>
        <position position="836"/>
    </location>
</feature>
<proteinExistence type="evidence at protein level"/>
<evidence type="ECO:0000250" key="1">
    <source>
        <dbReference type="UniProtKB" id="P0DQU2"/>
    </source>
</evidence>
<evidence type="ECO:0000250" key="2">
    <source>
        <dbReference type="UniProtKB" id="Q07075"/>
    </source>
</evidence>
<evidence type="ECO:0000255" key="3"/>
<evidence type="ECO:0000255" key="4">
    <source>
        <dbReference type="PIRSR" id="PIRSR633508-1"/>
    </source>
</evidence>
<evidence type="ECO:0000255" key="5">
    <source>
        <dbReference type="PIRSR" id="PIRSR633508-2"/>
    </source>
</evidence>
<evidence type="ECO:0000255" key="6">
    <source>
        <dbReference type="PIRSR" id="PIRSR633508-3"/>
    </source>
</evidence>
<evidence type="ECO:0000255" key="7">
    <source>
        <dbReference type="PIRSR" id="PIRSR633508-4"/>
    </source>
</evidence>
<evidence type="ECO:0000255" key="8">
    <source>
        <dbReference type="PROSITE-ProRule" id="PRU00498"/>
    </source>
</evidence>
<evidence type="ECO:0000269" key="9">
    <source>
    </source>
</evidence>
<evidence type="ECO:0000303" key="10">
    <source>
    </source>
</evidence>
<evidence type="ECO:0000305" key="11"/>
<evidence type="ECO:0000305" key="12">
    <source>
    </source>
</evidence>
<evidence type="ECO:0000312" key="13">
    <source>
        <dbReference type="EMBL" id="CBJ34330.1"/>
    </source>
</evidence>
<keyword id="KW-0031">Aminopeptidase</keyword>
<keyword id="KW-0106">Calcium</keyword>
<keyword id="KW-1003">Cell membrane</keyword>
<keyword id="KW-0903">Direct protein sequencing</keyword>
<keyword id="KW-1015">Disulfide bond</keyword>
<keyword id="KW-0325">Glycoprotein</keyword>
<keyword id="KW-0378">Hydrolase</keyword>
<keyword id="KW-0472">Membrane</keyword>
<keyword id="KW-0479">Metal-binding</keyword>
<keyword id="KW-0482">Metalloprotease</keyword>
<keyword id="KW-0645">Protease</keyword>
<keyword id="KW-0735">Signal-anchor</keyword>
<keyword id="KW-0812">Transmembrane</keyword>
<keyword id="KW-1133">Transmembrane helix</keyword>
<keyword id="KW-0862">Zinc</keyword>
<sequence>MDIEDKTSKMHCMKGKHVVIICGVVIAVGLILGLGLGLGLDTKACNPPEVNGQVSTKSPISNTPDVTSPSGSSVFCSAKNDENGPWTHFRLPNYVHPVHYDLHLTPEMEAEVYTGMVNISIRLEEQTTKHLWLHLRETKITEMPQLWTSSGQVIEIKRCFGYEPQEYVVIEAEEDLRPSNYFLSMRFKGYLNGSLVGFYSTTYGENGKIKYIAATDHEPTDARKSFPCFDEPNKKATYTISITHEHDYEAISNMPVEKTISLDNKWTKTIFKKSVPMSTYLVAWAVHQFKYEERISSRGIPLRIYAQPQQINTAIYAANVTKVVFDYFENYFNMNYSLPKLDKIAIPDFGTGAMENWGLITYRETNLLYDSQESAASNKQRVAAVIAHELVHQWFGNIVTMDWWDDLWLNEGFASFFEFMGVNAKEEKWQMLDQILISDLLPVLKEDSLVSSHPITVNVSSPDEITSVFDGISYSKGASILRMLEDWISPECFRAGCEKYLKEHYFKNAKTDDFWKAMEEVSGKPVKEVMDTWTRQMGYPVLKVDLNSTVTQQRFLLDPKADPSKPSSQFSYKWNIPVKWKEGNTSNIIFYNKSELAGITITRPSDLPLNSFLKVNKDHVGFYRVNYEPQVWRALTDIMMKDHQNFNLADRAGFIDDAFALARAGLLKYADALNLTRYLQNEAEYIPWQRAVVAISYIRNMFEDDKALYPKFQRYFGSLVKPIASELKWEXDEDHIKSLLRTTVLEFACKMEDPEALGNASLLFKKWMSGISLDVNLRLLVYRFGMQNSGDEQAWNYMFQKYRTATLAQEKEKLLYGLASVKNITLLNRFLSCIKNTSLIRSQDVFTVLGYISLNSYGKTMAWDWVRLNWEYLVKRYTLNDRNLGRLISRLSGTFNTELQLWQMENFFERYPDAGAGEASRKQALETTKSNIEWLKQYRDDVATWLENSEHSNFA</sequence>
<name>AMPE_BITRH</name>